<keyword id="KW-0066">ATP synthesis</keyword>
<keyword id="KW-0472">Membrane</keyword>
<keyword id="KW-0496">Mitochondrion</keyword>
<keyword id="KW-0999">Mitochondrion inner membrane</keyword>
<keyword id="KW-1185">Reference proteome</keyword>
<keyword id="KW-0812">Transmembrane</keyword>
<keyword id="KW-1133">Transmembrane helix</keyword>
<evidence type="ECO:0000250" key="1">
    <source>
        <dbReference type="UniProtKB" id="Q6UW78"/>
    </source>
</evidence>
<evidence type="ECO:0000255" key="2"/>
<evidence type="ECO:0000305" key="3"/>
<name>UQCC3_XENLA</name>
<organism>
    <name type="scientific">Xenopus laevis</name>
    <name type="common">African clawed frog</name>
    <dbReference type="NCBI Taxonomy" id="8355"/>
    <lineage>
        <taxon>Eukaryota</taxon>
        <taxon>Metazoa</taxon>
        <taxon>Chordata</taxon>
        <taxon>Craniata</taxon>
        <taxon>Vertebrata</taxon>
        <taxon>Euteleostomi</taxon>
        <taxon>Amphibia</taxon>
        <taxon>Batrachia</taxon>
        <taxon>Anura</taxon>
        <taxon>Pipoidea</taxon>
        <taxon>Pipidae</taxon>
        <taxon>Xenopodinae</taxon>
        <taxon>Xenopus</taxon>
        <taxon>Xenopus</taxon>
    </lineage>
</organism>
<comment type="function">
    <text evidence="1">Required for the assembly of the ubiquinol-cytochrome c reductase complex (mitochondrial respiratory chain complex III or cytochrome b-c1 complex), mediating cytochrome b recruitment and probably stabilization within the complex. Thereby, plays an important role in ATP production by mitochondria. Cardiolipin-binding protein, it may also control the cardiolipin composition of mitochondria membranes and their morphology.</text>
</comment>
<comment type="subunit">
    <text evidence="1">Associates with the ubiquinol-cytochrome c reductase complex (mitochondrial respiratory chain complex III or cytochrome b-c1 complex).</text>
</comment>
<comment type="subcellular location">
    <subcellularLocation>
        <location evidence="1">Mitochondrion inner membrane</location>
        <topology evidence="1">Single-pass membrane protein</topology>
    </subcellularLocation>
</comment>
<comment type="similarity">
    <text evidence="3">Belongs to the UQCC3 family.</text>
</comment>
<gene>
    <name evidence="1" type="primary">uqcc3</name>
</gene>
<reference key="1">
    <citation type="submission" date="2004-12" db="EMBL/GenBank/DDBJ databases">
        <authorList>
            <person name="Yang H.S."/>
            <person name="Lai S."/>
            <person name="Ruan X.Z."/>
            <person name="Zhao X.Y."/>
            <person name="Song M."/>
            <person name="Liao J."/>
            <person name="Wei Y.Q."/>
        </authorList>
    </citation>
    <scope>NUCLEOTIDE SEQUENCE [MRNA]</scope>
</reference>
<protein>
    <recommendedName>
        <fullName evidence="1">Ubiquinol-cytochrome-c reductase complex assembly factor 3</fullName>
    </recommendedName>
    <alternativeName>
        <fullName>Oocyte antigen VAP18</fullName>
    </alternativeName>
</protein>
<accession>Q2KP58</accession>
<proteinExistence type="inferred from homology"/>
<feature type="chain" id="PRO_0000360986" description="Ubiquinol-cytochrome-c reductase complex assembly factor 3">
    <location>
        <begin position="1"/>
        <end position="82"/>
    </location>
</feature>
<feature type="topological domain" description="Mitochondrial matrix" evidence="1">
    <location>
        <begin position="1"/>
        <end position="6"/>
    </location>
</feature>
<feature type="transmembrane region" description="Helical" evidence="2">
    <location>
        <begin position="7"/>
        <end position="29"/>
    </location>
</feature>
<feature type="topological domain" description="Mitochondrial intermembrane" evidence="1">
    <location>
        <begin position="30"/>
        <end position="82"/>
    </location>
</feature>
<sequence>METVRRIVKGTLLLGFCTGIGGDLWVLVAPGQERRLEMRMNYPEANPPMLAEAHKRNEMVLKVIEESAKTNENMARRSPWSS</sequence>
<dbReference type="EMBL" id="AY850274">
    <property type="protein sequence ID" value="AAW65537.1"/>
    <property type="molecule type" value="mRNA"/>
</dbReference>
<dbReference type="RefSeq" id="NP_001089152.1">
    <property type="nucleotide sequence ID" value="NM_001095683.1"/>
</dbReference>
<dbReference type="SMR" id="Q2KP58"/>
<dbReference type="GeneID" id="734185"/>
<dbReference type="KEGG" id="xla:734185"/>
<dbReference type="AGR" id="Xenbase:XB-GENE-6251847"/>
<dbReference type="CTD" id="734185"/>
<dbReference type="Xenbase" id="XB-GENE-6251847">
    <property type="gene designation" value="uqcc3.L"/>
</dbReference>
<dbReference type="OrthoDB" id="9884264at2759"/>
<dbReference type="Proteomes" id="UP000186698">
    <property type="component" value="Chromosome 2L"/>
</dbReference>
<dbReference type="Bgee" id="734185">
    <property type="expression patterns" value="Expressed in brain and 20 other cell types or tissues"/>
</dbReference>
<dbReference type="GO" id="GO:0005743">
    <property type="term" value="C:mitochondrial inner membrane"/>
    <property type="evidence" value="ECO:0000250"/>
    <property type="project" value="UniProtKB"/>
</dbReference>
<dbReference type="GO" id="GO:1901612">
    <property type="term" value="F:cardiolipin binding"/>
    <property type="evidence" value="ECO:0000250"/>
    <property type="project" value="UniProtKB"/>
</dbReference>
<dbReference type="GO" id="GO:0070300">
    <property type="term" value="F:phosphatidic acid binding"/>
    <property type="evidence" value="ECO:0000250"/>
    <property type="project" value="UniProtKB"/>
</dbReference>
<dbReference type="GO" id="GO:0006754">
    <property type="term" value="P:ATP biosynthetic process"/>
    <property type="evidence" value="ECO:0007669"/>
    <property type="project" value="UniProtKB-KW"/>
</dbReference>
<dbReference type="GO" id="GO:0042407">
    <property type="term" value="P:cristae formation"/>
    <property type="evidence" value="ECO:0000250"/>
    <property type="project" value="UniProtKB"/>
</dbReference>
<dbReference type="GO" id="GO:0006122">
    <property type="term" value="P:mitochondrial electron transport, ubiquinol to cytochrome c"/>
    <property type="evidence" value="ECO:0000250"/>
    <property type="project" value="UniProtKB"/>
</dbReference>
<dbReference type="GO" id="GO:0034551">
    <property type="term" value="P:mitochondrial respiratory chain complex III assembly"/>
    <property type="evidence" value="ECO:0000250"/>
    <property type="project" value="UniProtKB"/>
</dbReference>
<dbReference type="InterPro" id="IPR027896">
    <property type="entry name" value="UQCC3"/>
</dbReference>
<dbReference type="PANTHER" id="PTHR36465">
    <property type="entry name" value="UBIQUINOL-CYTOCHROME-C REDUCTASE COMPLEX ASSEMBLY FACTOR 3"/>
    <property type="match status" value="1"/>
</dbReference>
<dbReference type="PANTHER" id="PTHR36465:SF1">
    <property type="entry name" value="UBIQUINOL-CYTOCHROME-C REDUCTASE COMPLEX ASSEMBLY FACTOR 3"/>
    <property type="match status" value="1"/>
</dbReference>
<dbReference type="Pfam" id="PF15141">
    <property type="entry name" value="UQCC3"/>
    <property type="match status" value="1"/>
</dbReference>